<organism evidence="10">
    <name type="scientific">Drosophila melanogaster</name>
    <name type="common">Fruit fly</name>
    <dbReference type="NCBI Taxonomy" id="7227"/>
    <lineage>
        <taxon>Eukaryota</taxon>
        <taxon>Metazoa</taxon>
        <taxon>Ecdysozoa</taxon>
        <taxon>Arthropoda</taxon>
        <taxon>Hexapoda</taxon>
        <taxon>Insecta</taxon>
        <taxon>Pterygota</taxon>
        <taxon>Neoptera</taxon>
        <taxon>Endopterygota</taxon>
        <taxon>Diptera</taxon>
        <taxon>Brachycera</taxon>
        <taxon>Muscomorpha</taxon>
        <taxon>Ephydroidea</taxon>
        <taxon>Drosophilidae</taxon>
        <taxon>Drosophila</taxon>
        <taxon>Sophophora</taxon>
    </lineage>
</organism>
<keyword id="KW-0010">Activator</keyword>
<keyword id="KW-0156">Chromatin regulator</keyword>
<keyword id="KW-0175">Coiled coil</keyword>
<keyword id="KW-0963">Cytoplasm</keyword>
<keyword id="KW-0391">Immunity</keyword>
<keyword id="KW-0539">Nucleus</keyword>
<keyword id="KW-1185">Reference proteome</keyword>
<keyword id="KW-0678">Repressor</keyword>
<keyword id="KW-0804">Transcription</keyword>
<keyword id="KW-0805">Transcription regulation</keyword>
<sequence>MSADVRDILDMERANTPEVTRDSFLATKKRNFERTKTASRRPEGMHREVFALLYTDKKDAPPLLPTDTALGIGAGYKETKARLGMKKVRKWEWAPFSNPARNDSAVFHHWKRVTDNSTDYPFAKFNKQLEVPSYTMTEYNAHLRNNINNWSKVQTDHLFDLARRFDLRFIVMADRWNRQQHGTKTVEELKERYYEVVALLAKAKNQTSEKKVFVYDVEHERRRKEQLEKLFKRTTQQVEEENMLINEMKKIEARKKERERKTQDLQKLISQADQQNEHASNTPSTRKYEKKLHKKKVHQQPRPSRVDSVVNAIEIGSSGIKFADLRGSGVSLRSQRMKLPANIGQRKVKALEQAIQEFKVDPAPPPTEDICTSFNELRSDMVLLCELRTALSTCVYEMESLKHQYEAACPGKTLNIPPSLVPIKTEALDNSTN</sequence>
<reference evidence="10" key="1">
    <citation type="journal article" date="2000" name="Science">
        <title>The genome sequence of Drosophila melanogaster.</title>
        <authorList>
            <person name="Adams M.D."/>
            <person name="Celniker S.E."/>
            <person name="Holt R.A."/>
            <person name="Evans C.A."/>
            <person name="Gocayne J.D."/>
            <person name="Amanatides P.G."/>
            <person name="Scherer S.E."/>
            <person name="Li P.W."/>
            <person name="Hoskins R.A."/>
            <person name="Galle R.F."/>
            <person name="George R.A."/>
            <person name="Lewis S.E."/>
            <person name="Richards S."/>
            <person name="Ashburner M."/>
            <person name="Henderson S.N."/>
            <person name="Sutton G.G."/>
            <person name="Wortman J.R."/>
            <person name="Yandell M.D."/>
            <person name="Zhang Q."/>
            <person name="Chen L.X."/>
            <person name="Brandon R.C."/>
            <person name="Rogers Y.-H.C."/>
            <person name="Blazej R.G."/>
            <person name="Champe M."/>
            <person name="Pfeiffer B.D."/>
            <person name="Wan K.H."/>
            <person name="Doyle C."/>
            <person name="Baxter E.G."/>
            <person name="Helt G."/>
            <person name="Nelson C.R."/>
            <person name="Miklos G.L.G."/>
            <person name="Abril J.F."/>
            <person name="Agbayani A."/>
            <person name="An H.-J."/>
            <person name="Andrews-Pfannkoch C."/>
            <person name="Baldwin D."/>
            <person name="Ballew R.M."/>
            <person name="Basu A."/>
            <person name="Baxendale J."/>
            <person name="Bayraktaroglu L."/>
            <person name="Beasley E.M."/>
            <person name="Beeson K.Y."/>
            <person name="Benos P.V."/>
            <person name="Berman B.P."/>
            <person name="Bhandari D."/>
            <person name="Bolshakov S."/>
            <person name="Borkova D."/>
            <person name="Botchan M.R."/>
            <person name="Bouck J."/>
            <person name="Brokstein P."/>
            <person name="Brottier P."/>
            <person name="Burtis K.C."/>
            <person name="Busam D.A."/>
            <person name="Butler H."/>
            <person name="Cadieu E."/>
            <person name="Center A."/>
            <person name="Chandra I."/>
            <person name="Cherry J.M."/>
            <person name="Cawley S."/>
            <person name="Dahlke C."/>
            <person name="Davenport L.B."/>
            <person name="Davies P."/>
            <person name="de Pablos B."/>
            <person name="Delcher A."/>
            <person name="Deng Z."/>
            <person name="Mays A.D."/>
            <person name="Dew I."/>
            <person name="Dietz S.M."/>
            <person name="Dodson K."/>
            <person name="Doup L.E."/>
            <person name="Downes M."/>
            <person name="Dugan-Rocha S."/>
            <person name="Dunkov B.C."/>
            <person name="Dunn P."/>
            <person name="Durbin K.J."/>
            <person name="Evangelista C.C."/>
            <person name="Ferraz C."/>
            <person name="Ferriera S."/>
            <person name="Fleischmann W."/>
            <person name="Fosler C."/>
            <person name="Gabrielian A.E."/>
            <person name="Garg N.S."/>
            <person name="Gelbart W.M."/>
            <person name="Glasser K."/>
            <person name="Glodek A."/>
            <person name="Gong F."/>
            <person name="Gorrell J.H."/>
            <person name="Gu Z."/>
            <person name="Guan P."/>
            <person name="Harris M."/>
            <person name="Harris N.L."/>
            <person name="Harvey D.A."/>
            <person name="Heiman T.J."/>
            <person name="Hernandez J.R."/>
            <person name="Houck J."/>
            <person name="Hostin D."/>
            <person name="Houston K.A."/>
            <person name="Howland T.J."/>
            <person name="Wei M.-H."/>
            <person name="Ibegwam C."/>
            <person name="Jalali M."/>
            <person name="Kalush F."/>
            <person name="Karpen G.H."/>
            <person name="Ke Z."/>
            <person name="Kennison J.A."/>
            <person name="Ketchum K.A."/>
            <person name="Kimmel B.E."/>
            <person name="Kodira C.D."/>
            <person name="Kraft C.L."/>
            <person name="Kravitz S."/>
            <person name="Kulp D."/>
            <person name="Lai Z."/>
            <person name="Lasko P."/>
            <person name="Lei Y."/>
            <person name="Levitsky A.A."/>
            <person name="Li J.H."/>
            <person name="Li Z."/>
            <person name="Liang Y."/>
            <person name="Lin X."/>
            <person name="Liu X."/>
            <person name="Mattei B."/>
            <person name="McIntosh T.C."/>
            <person name="McLeod M.P."/>
            <person name="McPherson D."/>
            <person name="Merkulov G."/>
            <person name="Milshina N.V."/>
            <person name="Mobarry C."/>
            <person name="Morris J."/>
            <person name="Moshrefi A."/>
            <person name="Mount S.M."/>
            <person name="Moy M."/>
            <person name="Murphy B."/>
            <person name="Murphy L."/>
            <person name="Muzny D.M."/>
            <person name="Nelson D.L."/>
            <person name="Nelson D.R."/>
            <person name="Nelson K.A."/>
            <person name="Nixon K."/>
            <person name="Nusskern D.R."/>
            <person name="Pacleb J.M."/>
            <person name="Palazzolo M."/>
            <person name="Pittman G.S."/>
            <person name="Pan S."/>
            <person name="Pollard J."/>
            <person name="Puri V."/>
            <person name="Reese M.G."/>
            <person name="Reinert K."/>
            <person name="Remington K."/>
            <person name="Saunders R.D.C."/>
            <person name="Scheeler F."/>
            <person name="Shen H."/>
            <person name="Shue B.C."/>
            <person name="Siden-Kiamos I."/>
            <person name="Simpson M."/>
            <person name="Skupski M.P."/>
            <person name="Smith T.J."/>
            <person name="Spier E."/>
            <person name="Spradling A.C."/>
            <person name="Stapleton M."/>
            <person name="Strong R."/>
            <person name="Sun E."/>
            <person name="Svirskas R."/>
            <person name="Tector C."/>
            <person name="Turner R."/>
            <person name="Venter E."/>
            <person name="Wang A.H."/>
            <person name="Wang X."/>
            <person name="Wang Z.-Y."/>
            <person name="Wassarman D.A."/>
            <person name="Weinstock G.M."/>
            <person name="Weissenbach J."/>
            <person name="Williams S.M."/>
            <person name="Woodage T."/>
            <person name="Worley K.C."/>
            <person name="Wu D."/>
            <person name="Yang S."/>
            <person name="Yao Q.A."/>
            <person name="Ye J."/>
            <person name="Yeh R.-F."/>
            <person name="Zaveri J.S."/>
            <person name="Zhan M."/>
            <person name="Zhang G."/>
            <person name="Zhao Q."/>
            <person name="Zheng L."/>
            <person name="Zheng X.H."/>
            <person name="Zhong F.N."/>
            <person name="Zhong W."/>
            <person name="Zhou X."/>
            <person name="Zhu S.C."/>
            <person name="Zhu X."/>
            <person name="Smith H.O."/>
            <person name="Gibbs R.A."/>
            <person name="Myers E.W."/>
            <person name="Rubin G.M."/>
            <person name="Venter J.C."/>
        </authorList>
    </citation>
    <scope>NUCLEOTIDE SEQUENCE [LARGE SCALE GENOMIC DNA]</scope>
    <source>
        <strain evidence="10">Berkeley</strain>
    </source>
</reference>
<reference evidence="10" key="2">
    <citation type="journal article" date="2002" name="Genome Biol.">
        <title>Annotation of the Drosophila melanogaster euchromatic genome: a systematic review.</title>
        <authorList>
            <person name="Misra S."/>
            <person name="Crosby M.A."/>
            <person name="Mungall C.J."/>
            <person name="Matthews B.B."/>
            <person name="Campbell K.S."/>
            <person name="Hradecky P."/>
            <person name="Huang Y."/>
            <person name="Kaminker J.S."/>
            <person name="Millburn G.H."/>
            <person name="Prochnik S.E."/>
            <person name="Smith C.D."/>
            <person name="Tupy J.L."/>
            <person name="Whitfield E.J."/>
            <person name="Bayraktaroglu L."/>
            <person name="Berman B.P."/>
            <person name="Bettencourt B.R."/>
            <person name="Celniker S.E."/>
            <person name="de Grey A.D.N.J."/>
            <person name="Drysdale R.A."/>
            <person name="Harris N.L."/>
            <person name="Richter J."/>
            <person name="Russo S."/>
            <person name="Schroeder A.J."/>
            <person name="Shu S.Q."/>
            <person name="Stapleton M."/>
            <person name="Yamada C."/>
            <person name="Ashburner M."/>
            <person name="Gelbart W.M."/>
            <person name="Rubin G.M."/>
            <person name="Lewis S.E."/>
        </authorList>
    </citation>
    <scope>GENOME REANNOTATION</scope>
    <source>
        <strain evidence="10">Berkeley</strain>
    </source>
</reference>
<reference evidence="8" key="3">
    <citation type="journal article" date="2002" name="Genome Biol.">
        <title>A Drosophila full-length cDNA resource.</title>
        <authorList>
            <person name="Stapleton M."/>
            <person name="Carlson J.W."/>
            <person name="Brokstein P."/>
            <person name="Yu C."/>
            <person name="Champe M."/>
            <person name="George R.A."/>
            <person name="Guarin H."/>
            <person name="Kronmiller B."/>
            <person name="Pacleb J.M."/>
            <person name="Park S."/>
            <person name="Wan K.H."/>
            <person name="Rubin G.M."/>
            <person name="Celniker S.E."/>
        </authorList>
    </citation>
    <scope>NUCLEOTIDE SEQUENCE [LARGE SCALE MRNA]</scope>
    <source>
        <strain evidence="8">Berkeley</strain>
        <tissue evidence="8">Embryo</tissue>
    </source>
</reference>
<reference evidence="7" key="4">
    <citation type="journal article" date="2014" name="J. Biol. Chem.">
        <title>The chromatin regulator DMAP1 modulates activity of the nuclear factor B (NF-B) transcription factor Relish in the Drosophila innate immune response.</title>
        <authorList>
            <person name="Goto A."/>
            <person name="Fukuyama H."/>
            <person name="Imler J.L."/>
            <person name="Hoffmann J.A."/>
        </authorList>
    </citation>
    <scope>FUNCTION</scope>
    <scope>INTERACTION WITH REL; AKIRIN AND BAP55</scope>
    <scope>SUBCELLULAR LOCATION</scope>
    <scope>DISRUPTION PHENOTYPE</scope>
</reference>
<protein>
    <recommendedName>
        <fullName evidence="6">DNA methyltransferase 1-associated protein 1</fullName>
    </recommendedName>
</protein>
<gene>
    <name evidence="6 9" type="primary">DMAP1</name>
    <name evidence="9" type="ORF">CG11132</name>
</gene>
<accession>Q7K3D8</accession>
<proteinExistence type="evidence at protein level"/>
<evidence type="ECO:0000250" key="1">
    <source>
        <dbReference type="UniProtKB" id="Q9NPF5"/>
    </source>
</evidence>
<evidence type="ECO:0000255" key="2"/>
<evidence type="ECO:0000255" key="3">
    <source>
        <dbReference type="PROSITE-ProRule" id="PRU00133"/>
    </source>
</evidence>
<evidence type="ECO:0000256" key="4">
    <source>
        <dbReference type="SAM" id="MobiDB-lite"/>
    </source>
</evidence>
<evidence type="ECO:0000269" key="5">
    <source>
    </source>
</evidence>
<evidence type="ECO:0000303" key="6">
    <source>
    </source>
</evidence>
<evidence type="ECO:0000305" key="7"/>
<evidence type="ECO:0000312" key="8">
    <source>
        <dbReference type="EMBL" id="AAL13878.1"/>
    </source>
</evidence>
<evidence type="ECO:0000312" key="9">
    <source>
        <dbReference type="FlyBase" id="FBgn0034537"/>
    </source>
</evidence>
<evidence type="ECO:0000312" key="10">
    <source>
        <dbReference type="Proteomes" id="UP000000803"/>
    </source>
</evidence>
<feature type="chain" id="PRO_0000439672" description="DNA methyltransferase 1-associated protein 1">
    <location>
        <begin position="1"/>
        <end position="433"/>
    </location>
</feature>
<feature type="domain" description="Myb-like" evidence="3">
    <location>
        <begin position="148"/>
        <end position="197"/>
    </location>
</feature>
<feature type="region of interest" description="Required for nuclear localization" evidence="5">
    <location>
        <begin position="1"/>
        <end position="204"/>
    </location>
</feature>
<feature type="region of interest" description="Disordered" evidence="4">
    <location>
        <begin position="252"/>
        <end position="305"/>
    </location>
</feature>
<feature type="coiled-coil region" evidence="2">
    <location>
        <begin position="186"/>
        <end position="281"/>
    </location>
</feature>
<feature type="compositionally biased region" description="Basic and acidic residues" evidence="4">
    <location>
        <begin position="252"/>
        <end position="264"/>
    </location>
</feature>
<feature type="compositionally biased region" description="Polar residues" evidence="4">
    <location>
        <begin position="268"/>
        <end position="285"/>
    </location>
</feature>
<feature type="compositionally biased region" description="Basic residues" evidence="4">
    <location>
        <begin position="288"/>
        <end position="299"/>
    </location>
</feature>
<comment type="function">
    <text evidence="1 5">Involved in transcription repression and activation (By similarity). Required for larvae and pupal development, and for normal innate immune responses (PubMed:24947515). Involved in modulating the activation of the immune deficiency pathway (Imd), acting either downstream of, or at the level of, the NF-kappa-B factor Rel (PubMed:24947515). Possibly functions with akirin to regulate Rel, and its interaction with the Brahma complex protein Bap55 suggests that it may regulate the IMD pathway at the level of chromatin remodeling (PubMed:24947515).</text>
</comment>
<comment type="subunit">
    <text evidence="5">Interacts with Rel. Interacts with akirin and Bap55.</text>
</comment>
<comment type="subcellular location">
    <subcellularLocation>
        <location evidence="5">Nucleus</location>
    </subcellularLocation>
    <subcellularLocation>
        <location evidence="5">Cytoplasm</location>
    </subcellularLocation>
</comment>
<comment type="disruption phenotype">
    <text evidence="5">RNAi-mediated knockdown is larval or pupal lethal. RNAi-mediated knockdown in adults results in reduced expression of the antimicrobial peptide genes DptA and Dro in response to septic injury with Gram-negative bacteria E.coli. Adults infected with the Gram-positive bacteria M.luteus display increased expression of the antimicrobial peptide gene Drs.</text>
</comment>
<name>DMAP1_DROME</name>
<dbReference type="EMBL" id="AE013599">
    <property type="protein sequence ID" value="AAF57436.1"/>
    <property type="molecule type" value="Genomic_DNA"/>
</dbReference>
<dbReference type="EMBL" id="AY058649">
    <property type="protein sequence ID" value="AAL13878.1"/>
    <property type="molecule type" value="mRNA"/>
</dbReference>
<dbReference type="RefSeq" id="NP_611503.1">
    <property type="nucleotide sequence ID" value="NM_137659.5"/>
</dbReference>
<dbReference type="SMR" id="Q7K3D8"/>
<dbReference type="ComplexPortal" id="CPX-2264">
    <property type="entry name" value="NuA4 histone acetyltransferase complex"/>
</dbReference>
<dbReference type="ComplexPortal" id="CPX-2423">
    <property type="entry name" value="SWR1 chromatin remodelling complex"/>
</dbReference>
<dbReference type="FunCoup" id="Q7K3D8">
    <property type="interactions" value="1920"/>
</dbReference>
<dbReference type="IntAct" id="Q7K3D8">
    <property type="interactions" value="12"/>
</dbReference>
<dbReference type="STRING" id="7227.FBpp0085546"/>
<dbReference type="PaxDb" id="7227-FBpp0085546"/>
<dbReference type="DNASU" id="37339"/>
<dbReference type="EnsemblMetazoa" id="FBtr0086232">
    <property type="protein sequence ID" value="FBpp0085546"/>
    <property type="gene ID" value="FBgn0034537"/>
</dbReference>
<dbReference type="GeneID" id="37339"/>
<dbReference type="KEGG" id="dme:Dmel_CG11132"/>
<dbReference type="UCSC" id="CG11132-RA">
    <property type="organism name" value="d. melanogaster"/>
</dbReference>
<dbReference type="AGR" id="FB:FBgn0034537"/>
<dbReference type="CTD" id="55929"/>
<dbReference type="FlyBase" id="FBgn0034537">
    <property type="gene designation" value="DMAP1"/>
</dbReference>
<dbReference type="VEuPathDB" id="VectorBase:FBgn0034537"/>
<dbReference type="eggNOG" id="KOG2656">
    <property type="taxonomic scope" value="Eukaryota"/>
</dbReference>
<dbReference type="GeneTree" id="ENSGT00390000016466"/>
<dbReference type="HOGENOM" id="CLU_018539_1_1_1"/>
<dbReference type="InParanoid" id="Q7K3D8"/>
<dbReference type="OMA" id="RNNIQNW"/>
<dbReference type="OrthoDB" id="19740at2759"/>
<dbReference type="PhylomeDB" id="Q7K3D8"/>
<dbReference type="SignaLink" id="Q7K3D8"/>
<dbReference type="BioGRID-ORCS" id="37339">
    <property type="hits" value="0 hits in 1 CRISPR screen"/>
</dbReference>
<dbReference type="GenomeRNAi" id="37339"/>
<dbReference type="PRO" id="PR:Q7K3D8"/>
<dbReference type="Proteomes" id="UP000000803">
    <property type="component" value="Chromosome 2R"/>
</dbReference>
<dbReference type="Bgee" id="FBgn0034537">
    <property type="expression patterns" value="Expressed in egg cell and 93 other cell types or tissues"/>
</dbReference>
<dbReference type="GO" id="GO:0005737">
    <property type="term" value="C:cytoplasm"/>
    <property type="evidence" value="ECO:0007669"/>
    <property type="project" value="UniProtKB-SubCell"/>
</dbReference>
<dbReference type="GO" id="GO:0035267">
    <property type="term" value="C:NuA4 histone acetyltransferase complex"/>
    <property type="evidence" value="ECO:0000314"/>
    <property type="project" value="FlyBase"/>
</dbReference>
<dbReference type="GO" id="GO:0005634">
    <property type="term" value="C:nucleus"/>
    <property type="evidence" value="ECO:0000314"/>
    <property type="project" value="FlyBase"/>
</dbReference>
<dbReference type="GO" id="GO:0000812">
    <property type="term" value="C:Swr1 complex"/>
    <property type="evidence" value="ECO:0000318"/>
    <property type="project" value="GO_Central"/>
</dbReference>
<dbReference type="GO" id="GO:0003714">
    <property type="term" value="F:transcription corepressor activity"/>
    <property type="evidence" value="ECO:0000318"/>
    <property type="project" value="GO_Central"/>
</dbReference>
<dbReference type="GO" id="GO:0006281">
    <property type="term" value="P:DNA repair"/>
    <property type="evidence" value="ECO:0007669"/>
    <property type="project" value="InterPro"/>
</dbReference>
<dbReference type="GO" id="GO:0140861">
    <property type="term" value="P:DNA repair-dependent chromatin remodeling"/>
    <property type="evidence" value="ECO:0000314"/>
    <property type="project" value="FlyBase"/>
</dbReference>
<dbReference type="GO" id="GO:0002376">
    <property type="term" value="P:immune system process"/>
    <property type="evidence" value="ECO:0007669"/>
    <property type="project" value="UniProtKB-KW"/>
</dbReference>
<dbReference type="GO" id="GO:0000122">
    <property type="term" value="P:negative regulation of transcription by RNA polymerase II"/>
    <property type="evidence" value="ECO:0000318"/>
    <property type="project" value="GO_Central"/>
</dbReference>
<dbReference type="GO" id="GO:0002225">
    <property type="term" value="P:positive regulation of antimicrobial peptide production"/>
    <property type="evidence" value="ECO:0000315"/>
    <property type="project" value="FlyBase"/>
</dbReference>
<dbReference type="GO" id="GO:0045089">
    <property type="term" value="P:positive regulation of innate immune response"/>
    <property type="evidence" value="ECO:0000315"/>
    <property type="project" value="FlyBase"/>
</dbReference>
<dbReference type="FunFam" id="1.10.10.60:FF:000087">
    <property type="entry name" value="DNA methyltransferase 1-associated protein 1"/>
    <property type="match status" value="1"/>
</dbReference>
<dbReference type="Gene3D" id="1.10.10.60">
    <property type="entry name" value="Homeodomain-like"/>
    <property type="match status" value="1"/>
</dbReference>
<dbReference type="InterPro" id="IPR032563">
    <property type="entry name" value="DAMP1_SANT-like"/>
</dbReference>
<dbReference type="InterPro" id="IPR008468">
    <property type="entry name" value="DMAP1"/>
</dbReference>
<dbReference type="InterPro" id="IPR027109">
    <property type="entry name" value="Swc4/Dmap1"/>
</dbReference>
<dbReference type="PANTHER" id="PTHR12855:SF10">
    <property type="entry name" value="DNA METHYLTRANSFERASE 1-ASSOCIATED PROTEIN 1"/>
    <property type="match status" value="1"/>
</dbReference>
<dbReference type="PANTHER" id="PTHR12855">
    <property type="entry name" value="DNA METHYLTRANSFERASE 1-ASSOCIATED PROTEIN 1 FAMILY MEMBER"/>
    <property type="match status" value="1"/>
</dbReference>
<dbReference type="Pfam" id="PF05499">
    <property type="entry name" value="DMAP1"/>
    <property type="match status" value="1"/>
</dbReference>
<dbReference type="Pfam" id="PF16282">
    <property type="entry name" value="SANT_DAMP1_like"/>
    <property type="match status" value="1"/>
</dbReference>